<reference key="1">
    <citation type="submission" date="2007-09" db="EMBL/GenBank/DDBJ databases">
        <title>Complete genome sequence of Rickettsia akari.</title>
        <authorList>
            <person name="Madan A."/>
            <person name="Fahey J."/>
            <person name="Helton E."/>
            <person name="Ketteman M."/>
            <person name="Madan A."/>
            <person name="Rodrigues S."/>
            <person name="Sanchez A."/>
            <person name="Whiting M."/>
            <person name="Dasch G."/>
            <person name="Eremeeva M."/>
        </authorList>
    </citation>
    <scope>NUCLEOTIDE SEQUENCE [LARGE SCALE GENOMIC DNA]</scope>
    <source>
        <strain>Hartford</strain>
    </source>
</reference>
<feature type="chain" id="PRO_1000057254" description="UDP-N-acetylglucosamine--N-acetylmuramyl-(pentapeptide) pyrophosphoryl-undecaprenol N-acetylglucosamine transferase">
    <location>
        <begin position="1"/>
        <end position="382"/>
    </location>
</feature>
<feature type="binding site" evidence="1">
    <location>
        <begin position="11"/>
        <end position="13"/>
    </location>
    <ligand>
        <name>UDP-N-acetyl-alpha-D-glucosamine</name>
        <dbReference type="ChEBI" id="CHEBI:57705"/>
    </ligand>
</feature>
<feature type="binding site" evidence="1">
    <location>
        <position position="117"/>
    </location>
    <ligand>
        <name>UDP-N-acetyl-alpha-D-glucosamine</name>
        <dbReference type="ChEBI" id="CHEBI:57705"/>
    </ligand>
</feature>
<feature type="binding site" evidence="1">
    <location>
        <position position="160"/>
    </location>
    <ligand>
        <name>UDP-N-acetyl-alpha-D-glucosamine</name>
        <dbReference type="ChEBI" id="CHEBI:57705"/>
    </ligand>
</feature>
<feature type="binding site" evidence="1">
    <location>
        <position position="209"/>
    </location>
    <ligand>
        <name>UDP-N-acetyl-alpha-D-glucosamine</name>
        <dbReference type="ChEBI" id="CHEBI:57705"/>
    </ligand>
</feature>
<feature type="binding site" evidence="1">
    <location>
        <position position="311"/>
    </location>
    <ligand>
        <name>UDP-N-acetyl-alpha-D-glucosamine</name>
        <dbReference type="ChEBI" id="CHEBI:57705"/>
    </ligand>
</feature>
<gene>
    <name evidence="1" type="primary">murG</name>
    <name type="ordered locus">A1C_03060</name>
</gene>
<protein>
    <recommendedName>
        <fullName evidence="1">UDP-N-acetylglucosamine--N-acetylmuramyl-(pentapeptide) pyrophosphoryl-undecaprenol N-acetylglucosamine transferase</fullName>
        <ecNumber evidence="1">2.4.1.227</ecNumber>
    </recommendedName>
    <alternativeName>
        <fullName evidence="1">Undecaprenyl-PP-MurNAc-pentapeptide-UDPGlcNAc GlcNAc transferase</fullName>
    </alternativeName>
</protein>
<proteinExistence type="inferred from homology"/>
<keyword id="KW-0131">Cell cycle</keyword>
<keyword id="KW-0132">Cell division</keyword>
<keyword id="KW-0997">Cell inner membrane</keyword>
<keyword id="KW-1003">Cell membrane</keyword>
<keyword id="KW-0133">Cell shape</keyword>
<keyword id="KW-0961">Cell wall biogenesis/degradation</keyword>
<keyword id="KW-0328">Glycosyltransferase</keyword>
<keyword id="KW-0472">Membrane</keyword>
<keyword id="KW-0573">Peptidoglycan synthesis</keyword>
<keyword id="KW-0808">Transferase</keyword>
<name>MURG_RICAH</name>
<dbReference type="EC" id="2.4.1.227" evidence="1"/>
<dbReference type="EMBL" id="CP000847">
    <property type="protein sequence ID" value="ABV74902.1"/>
    <property type="molecule type" value="Genomic_DNA"/>
</dbReference>
<dbReference type="RefSeq" id="WP_012149535.1">
    <property type="nucleotide sequence ID" value="NC_009881.1"/>
</dbReference>
<dbReference type="SMR" id="A8GNC7"/>
<dbReference type="STRING" id="293614.A1C_03060"/>
<dbReference type="CAZy" id="GT28">
    <property type="family name" value="Glycosyltransferase Family 28"/>
</dbReference>
<dbReference type="KEGG" id="rak:A1C_03060"/>
<dbReference type="eggNOG" id="COG0707">
    <property type="taxonomic scope" value="Bacteria"/>
</dbReference>
<dbReference type="HOGENOM" id="CLU_037404_2_1_5"/>
<dbReference type="UniPathway" id="UPA00219"/>
<dbReference type="Proteomes" id="UP000006830">
    <property type="component" value="Chromosome"/>
</dbReference>
<dbReference type="GO" id="GO:0005886">
    <property type="term" value="C:plasma membrane"/>
    <property type="evidence" value="ECO:0007669"/>
    <property type="project" value="UniProtKB-SubCell"/>
</dbReference>
<dbReference type="GO" id="GO:0051991">
    <property type="term" value="F:UDP-N-acetyl-D-glucosamine:N-acetylmuramoyl-L-alanyl-D-glutamyl-meso-2,6-diaminopimelyl-D-alanyl-D-alanine-diphosphoundecaprenol 4-beta-N-acetylglucosaminlytransferase activity"/>
    <property type="evidence" value="ECO:0007669"/>
    <property type="project" value="RHEA"/>
</dbReference>
<dbReference type="GO" id="GO:0050511">
    <property type="term" value="F:undecaprenyldiphospho-muramoylpentapeptide beta-N-acetylglucosaminyltransferase activity"/>
    <property type="evidence" value="ECO:0007669"/>
    <property type="project" value="UniProtKB-UniRule"/>
</dbReference>
<dbReference type="GO" id="GO:0005975">
    <property type="term" value="P:carbohydrate metabolic process"/>
    <property type="evidence" value="ECO:0007669"/>
    <property type="project" value="InterPro"/>
</dbReference>
<dbReference type="GO" id="GO:0051301">
    <property type="term" value="P:cell division"/>
    <property type="evidence" value="ECO:0007669"/>
    <property type="project" value="UniProtKB-KW"/>
</dbReference>
<dbReference type="GO" id="GO:0071555">
    <property type="term" value="P:cell wall organization"/>
    <property type="evidence" value="ECO:0007669"/>
    <property type="project" value="UniProtKB-KW"/>
</dbReference>
<dbReference type="GO" id="GO:0030259">
    <property type="term" value="P:lipid glycosylation"/>
    <property type="evidence" value="ECO:0007669"/>
    <property type="project" value="UniProtKB-UniRule"/>
</dbReference>
<dbReference type="GO" id="GO:0009252">
    <property type="term" value="P:peptidoglycan biosynthetic process"/>
    <property type="evidence" value="ECO:0007669"/>
    <property type="project" value="UniProtKB-UniRule"/>
</dbReference>
<dbReference type="GO" id="GO:0008360">
    <property type="term" value="P:regulation of cell shape"/>
    <property type="evidence" value="ECO:0007669"/>
    <property type="project" value="UniProtKB-KW"/>
</dbReference>
<dbReference type="CDD" id="cd03785">
    <property type="entry name" value="GT28_MurG"/>
    <property type="match status" value="1"/>
</dbReference>
<dbReference type="Gene3D" id="3.40.50.2000">
    <property type="entry name" value="Glycogen Phosphorylase B"/>
    <property type="match status" value="2"/>
</dbReference>
<dbReference type="HAMAP" id="MF_00033">
    <property type="entry name" value="MurG"/>
    <property type="match status" value="1"/>
</dbReference>
<dbReference type="InterPro" id="IPR006009">
    <property type="entry name" value="GlcNAc_MurG"/>
</dbReference>
<dbReference type="InterPro" id="IPR007235">
    <property type="entry name" value="Glyco_trans_28_C"/>
</dbReference>
<dbReference type="InterPro" id="IPR004276">
    <property type="entry name" value="GlycoTrans_28_N"/>
</dbReference>
<dbReference type="NCBIfam" id="TIGR01133">
    <property type="entry name" value="murG"/>
    <property type="match status" value="1"/>
</dbReference>
<dbReference type="PANTHER" id="PTHR21015:SF22">
    <property type="entry name" value="GLYCOSYLTRANSFERASE"/>
    <property type="match status" value="1"/>
</dbReference>
<dbReference type="PANTHER" id="PTHR21015">
    <property type="entry name" value="UDP-N-ACETYLGLUCOSAMINE--N-ACETYLMURAMYL-(PENTAPEPTIDE) PYROPHOSPHORYL-UNDECAPRENOL N-ACETYLGLUCOSAMINE TRANSFERASE 1"/>
    <property type="match status" value="1"/>
</dbReference>
<dbReference type="Pfam" id="PF04101">
    <property type="entry name" value="Glyco_tran_28_C"/>
    <property type="match status" value="1"/>
</dbReference>
<dbReference type="Pfam" id="PF03033">
    <property type="entry name" value="Glyco_transf_28"/>
    <property type="match status" value="1"/>
</dbReference>
<dbReference type="SUPFAM" id="SSF53756">
    <property type="entry name" value="UDP-Glycosyltransferase/glycogen phosphorylase"/>
    <property type="match status" value="1"/>
</dbReference>
<accession>A8GNC7</accession>
<organism>
    <name type="scientific">Rickettsia akari (strain Hartford)</name>
    <dbReference type="NCBI Taxonomy" id="293614"/>
    <lineage>
        <taxon>Bacteria</taxon>
        <taxon>Pseudomonadati</taxon>
        <taxon>Pseudomonadota</taxon>
        <taxon>Alphaproteobacteria</taxon>
        <taxon>Rickettsiales</taxon>
        <taxon>Rickettsiaceae</taxon>
        <taxon>Rickettsieae</taxon>
        <taxon>Rickettsia</taxon>
        <taxon>spotted fever group</taxon>
    </lineage>
</organism>
<comment type="function">
    <text evidence="1">Cell wall formation. Catalyzes the transfer of a GlcNAc subunit on undecaprenyl-pyrophosphoryl-MurNAc-pentapeptide (lipid intermediate I) to form undecaprenyl-pyrophosphoryl-MurNAc-(pentapeptide)GlcNAc (lipid intermediate II).</text>
</comment>
<comment type="catalytic activity">
    <reaction evidence="1">
        <text>di-trans,octa-cis-undecaprenyl diphospho-N-acetyl-alpha-D-muramoyl-L-alanyl-D-glutamyl-meso-2,6-diaminopimeloyl-D-alanyl-D-alanine + UDP-N-acetyl-alpha-D-glucosamine = di-trans,octa-cis-undecaprenyl diphospho-[N-acetyl-alpha-D-glucosaminyl-(1-&gt;4)]-N-acetyl-alpha-D-muramoyl-L-alanyl-D-glutamyl-meso-2,6-diaminopimeloyl-D-alanyl-D-alanine + UDP + H(+)</text>
        <dbReference type="Rhea" id="RHEA:31227"/>
        <dbReference type="ChEBI" id="CHEBI:15378"/>
        <dbReference type="ChEBI" id="CHEBI:57705"/>
        <dbReference type="ChEBI" id="CHEBI:58223"/>
        <dbReference type="ChEBI" id="CHEBI:61387"/>
        <dbReference type="ChEBI" id="CHEBI:61388"/>
        <dbReference type="EC" id="2.4.1.227"/>
    </reaction>
</comment>
<comment type="pathway">
    <text evidence="1">Cell wall biogenesis; peptidoglycan biosynthesis.</text>
</comment>
<comment type="subcellular location">
    <subcellularLocation>
        <location evidence="1">Cell inner membrane</location>
        <topology evidence="1">Peripheral membrane protein</topology>
        <orientation evidence="1">Cytoplasmic side</orientation>
    </subcellularLocation>
</comment>
<comment type="similarity">
    <text evidence="1">Belongs to the glycosyltransferase 28 family. MurG subfamily.</text>
</comment>
<sequence>MKKIILAAGGTGGHFFPAVALGEELVKRGYEVHFITDLRCQKYINQNLGLIFHILDLKRSSNIFLFLPNLSIAILKAIKLLYNIRSSAIIGFGSYPVISSMFAAVFLRVPIIIHEQNSYLGKVNKFFASFAKRIAISYEEVKNLPEFAKSKIVVTGGIVRENIRELDSIVYSASHRGLITGSKKIKKRLDSVVTPQNDKLFTIFIFGGSQGATLFSELIPASIQILMQKQPNLKLNIIQQAALDDQVKIKDIYSKLNINYECAEFFDNMALQYKEADVVISRAGASTIEELTYIGLPAIFIPLPSAADNHQYYNAKLLEDKKAGWCLEQSDISAGKLADKILDLISNPKILEEASKNLLKRRKEGHVLLSDLIEGVIYHPVA</sequence>
<evidence type="ECO:0000255" key="1">
    <source>
        <dbReference type="HAMAP-Rule" id="MF_00033"/>
    </source>
</evidence>